<protein>
    <recommendedName>
        <fullName>Probable deoxyuridine 5'-triphosphate nucleotidohydrolase</fullName>
        <shortName>dUTPase</shortName>
        <ecNumber>3.6.1.23</ecNumber>
    </recommendedName>
    <alternativeName>
        <fullName>dUTP pyrophosphatase</fullName>
    </alternativeName>
</protein>
<name>DUT_SCHPO</name>
<accession>Q9P6Q5</accession>
<reference key="1">
    <citation type="journal article" date="2002" name="Nature">
        <title>The genome sequence of Schizosaccharomyces pombe.</title>
        <authorList>
            <person name="Wood V."/>
            <person name="Gwilliam R."/>
            <person name="Rajandream M.A."/>
            <person name="Lyne M.H."/>
            <person name="Lyne R."/>
            <person name="Stewart A."/>
            <person name="Sgouros J.G."/>
            <person name="Peat N."/>
            <person name="Hayles J."/>
            <person name="Baker S.G."/>
            <person name="Basham D."/>
            <person name="Bowman S."/>
            <person name="Brooks K."/>
            <person name="Brown D."/>
            <person name="Brown S."/>
            <person name="Chillingworth T."/>
            <person name="Churcher C.M."/>
            <person name="Collins M."/>
            <person name="Connor R."/>
            <person name="Cronin A."/>
            <person name="Davis P."/>
            <person name="Feltwell T."/>
            <person name="Fraser A."/>
            <person name="Gentles S."/>
            <person name="Goble A."/>
            <person name="Hamlin N."/>
            <person name="Harris D.E."/>
            <person name="Hidalgo J."/>
            <person name="Hodgson G."/>
            <person name="Holroyd S."/>
            <person name="Hornsby T."/>
            <person name="Howarth S."/>
            <person name="Huckle E.J."/>
            <person name="Hunt S."/>
            <person name="Jagels K."/>
            <person name="James K.D."/>
            <person name="Jones L."/>
            <person name="Jones M."/>
            <person name="Leather S."/>
            <person name="McDonald S."/>
            <person name="McLean J."/>
            <person name="Mooney P."/>
            <person name="Moule S."/>
            <person name="Mungall K.L."/>
            <person name="Murphy L.D."/>
            <person name="Niblett D."/>
            <person name="Odell C."/>
            <person name="Oliver K."/>
            <person name="O'Neil S."/>
            <person name="Pearson D."/>
            <person name="Quail M.A."/>
            <person name="Rabbinowitsch E."/>
            <person name="Rutherford K.M."/>
            <person name="Rutter S."/>
            <person name="Saunders D."/>
            <person name="Seeger K."/>
            <person name="Sharp S."/>
            <person name="Skelton J."/>
            <person name="Simmonds M.N."/>
            <person name="Squares R."/>
            <person name="Squares S."/>
            <person name="Stevens K."/>
            <person name="Taylor K."/>
            <person name="Taylor R.G."/>
            <person name="Tivey A."/>
            <person name="Walsh S.V."/>
            <person name="Warren T."/>
            <person name="Whitehead S."/>
            <person name="Woodward J.R."/>
            <person name="Volckaert G."/>
            <person name="Aert R."/>
            <person name="Robben J."/>
            <person name="Grymonprez B."/>
            <person name="Weltjens I."/>
            <person name="Vanstreels E."/>
            <person name="Rieger M."/>
            <person name="Schaefer M."/>
            <person name="Mueller-Auer S."/>
            <person name="Gabel C."/>
            <person name="Fuchs M."/>
            <person name="Duesterhoeft A."/>
            <person name="Fritzc C."/>
            <person name="Holzer E."/>
            <person name="Moestl D."/>
            <person name="Hilbert H."/>
            <person name="Borzym K."/>
            <person name="Langer I."/>
            <person name="Beck A."/>
            <person name="Lehrach H."/>
            <person name="Reinhardt R."/>
            <person name="Pohl T.M."/>
            <person name="Eger P."/>
            <person name="Zimmermann W."/>
            <person name="Wedler H."/>
            <person name="Wambutt R."/>
            <person name="Purnelle B."/>
            <person name="Goffeau A."/>
            <person name="Cadieu E."/>
            <person name="Dreano S."/>
            <person name="Gloux S."/>
            <person name="Lelaure V."/>
            <person name="Mottier S."/>
            <person name="Galibert F."/>
            <person name="Aves S.J."/>
            <person name="Xiang Z."/>
            <person name="Hunt C."/>
            <person name="Moore K."/>
            <person name="Hurst S.M."/>
            <person name="Lucas M."/>
            <person name="Rochet M."/>
            <person name="Gaillardin C."/>
            <person name="Tallada V.A."/>
            <person name="Garzon A."/>
            <person name="Thode G."/>
            <person name="Daga R.R."/>
            <person name="Cruzado L."/>
            <person name="Jimenez J."/>
            <person name="Sanchez M."/>
            <person name="del Rey F."/>
            <person name="Benito J."/>
            <person name="Dominguez A."/>
            <person name="Revuelta J.L."/>
            <person name="Moreno S."/>
            <person name="Armstrong J."/>
            <person name="Forsburg S.L."/>
            <person name="Cerutti L."/>
            <person name="Lowe T."/>
            <person name="McCombie W.R."/>
            <person name="Paulsen I."/>
            <person name="Potashkin J."/>
            <person name="Shpakovski G.V."/>
            <person name="Ussery D."/>
            <person name="Barrell B.G."/>
            <person name="Nurse P."/>
        </authorList>
    </citation>
    <scope>NUCLEOTIDE SEQUENCE [LARGE SCALE GENOMIC DNA]</scope>
    <source>
        <strain>972 / ATCC 24843</strain>
    </source>
</reference>
<evidence type="ECO:0000250" key="1"/>
<evidence type="ECO:0000305" key="2"/>
<sequence>MSFFVQKLSEKATIPTKGSANSAGYDLYAAAECIVPRRGKVLVDTDLAIAVPEGTYGRVAPRSGLASKHSIDTGAGVIDADYRGHVRVLLFNYSDVDFPIKVGDRIAQLILERIVNPPVILVESLEATVRGANGFGSTGV</sequence>
<organism>
    <name type="scientific">Schizosaccharomyces pombe (strain 972 / ATCC 24843)</name>
    <name type="common">Fission yeast</name>
    <dbReference type="NCBI Taxonomy" id="284812"/>
    <lineage>
        <taxon>Eukaryota</taxon>
        <taxon>Fungi</taxon>
        <taxon>Dikarya</taxon>
        <taxon>Ascomycota</taxon>
        <taxon>Taphrinomycotina</taxon>
        <taxon>Schizosaccharomycetes</taxon>
        <taxon>Schizosaccharomycetales</taxon>
        <taxon>Schizosaccharomycetaceae</taxon>
        <taxon>Schizosaccharomyces</taxon>
    </lineage>
</organism>
<gene>
    <name type="ORF">SPAC644.05c</name>
</gene>
<proteinExistence type="inferred from homology"/>
<dbReference type="EC" id="3.6.1.23"/>
<dbReference type="EMBL" id="CU329670">
    <property type="protein sequence ID" value="CAB90132.1"/>
    <property type="molecule type" value="Genomic_DNA"/>
</dbReference>
<dbReference type="SMR" id="Q9P6Q5"/>
<dbReference type="FunCoup" id="Q9P6Q5">
    <property type="interactions" value="1183"/>
</dbReference>
<dbReference type="STRING" id="284812.Q9P6Q5"/>
<dbReference type="iPTMnet" id="Q9P6Q5"/>
<dbReference type="PaxDb" id="4896-SPAC644.05c.1"/>
<dbReference type="EnsemblFungi" id="SPAC644.05c.1">
    <property type="protein sequence ID" value="SPAC644.05c.1:pep"/>
    <property type="gene ID" value="SPAC644.05c"/>
</dbReference>
<dbReference type="KEGG" id="spo:2543669"/>
<dbReference type="PomBase" id="SPAC644.05c"/>
<dbReference type="VEuPathDB" id="FungiDB:SPAC644.05c"/>
<dbReference type="eggNOG" id="KOG3370">
    <property type="taxonomic scope" value="Eukaryota"/>
</dbReference>
<dbReference type="HOGENOM" id="CLU_068508_2_1_1"/>
<dbReference type="InParanoid" id="Q9P6Q5"/>
<dbReference type="OMA" id="GREFHTQ"/>
<dbReference type="PhylomeDB" id="Q9P6Q5"/>
<dbReference type="Reactome" id="R-SPO-499943">
    <property type="pathway name" value="Interconversion of nucleotide di- and triphosphates"/>
</dbReference>
<dbReference type="UniPathway" id="UPA00610">
    <property type="reaction ID" value="UER00666"/>
</dbReference>
<dbReference type="PRO" id="PR:Q9P6Q5"/>
<dbReference type="Proteomes" id="UP000002485">
    <property type="component" value="Chromosome I"/>
</dbReference>
<dbReference type="GO" id="GO:0005829">
    <property type="term" value="C:cytosol"/>
    <property type="evidence" value="ECO:0007005"/>
    <property type="project" value="PomBase"/>
</dbReference>
<dbReference type="GO" id="GO:0005634">
    <property type="term" value="C:nucleus"/>
    <property type="evidence" value="ECO:0007005"/>
    <property type="project" value="PomBase"/>
</dbReference>
<dbReference type="GO" id="GO:0035870">
    <property type="term" value="F:dITP diphosphatase activity"/>
    <property type="evidence" value="ECO:0000266"/>
    <property type="project" value="PomBase"/>
</dbReference>
<dbReference type="GO" id="GO:0004170">
    <property type="term" value="F:dUTP diphosphatase activity"/>
    <property type="evidence" value="ECO:0000318"/>
    <property type="project" value="GO_Central"/>
</dbReference>
<dbReference type="GO" id="GO:0000287">
    <property type="term" value="F:magnesium ion binding"/>
    <property type="evidence" value="ECO:0000318"/>
    <property type="project" value="GO_Central"/>
</dbReference>
<dbReference type="GO" id="GO:0035863">
    <property type="term" value="P:dITP catabolic process"/>
    <property type="evidence" value="ECO:0000266"/>
    <property type="project" value="PomBase"/>
</dbReference>
<dbReference type="GO" id="GO:0006226">
    <property type="term" value="P:dUMP biosynthetic process"/>
    <property type="evidence" value="ECO:0000318"/>
    <property type="project" value="GO_Central"/>
</dbReference>
<dbReference type="GO" id="GO:0046081">
    <property type="term" value="P:dUTP catabolic process"/>
    <property type="evidence" value="ECO:0000318"/>
    <property type="project" value="GO_Central"/>
</dbReference>
<dbReference type="CDD" id="cd07557">
    <property type="entry name" value="trimeric_dUTPase"/>
    <property type="match status" value="1"/>
</dbReference>
<dbReference type="FunFam" id="2.70.40.10:FF:000004">
    <property type="entry name" value="Deoxyuridine triphosphatase"/>
    <property type="match status" value="1"/>
</dbReference>
<dbReference type="Gene3D" id="2.70.40.10">
    <property type="match status" value="1"/>
</dbReference>
<dbReference type="InterPro" id="IPR008181">
    <property type="entry name" value="dUTPase"/>
</dbReference>
<dbReference type="InterPro" id="IPR029054">
    <property type="entry name" value="dUTPase-like"/>
</dbReference>
<dbReference type="InterPro" id="IPR036157">
    <property type="entry name" value="dUTPase-like_sf"/>
</dbReference>
<dbReference type="InterPro" id="IPR033704">
    <property type="entry name" value="dUTPase_trimeric"/>
</dbReference>
<dbReference type="NCBIfam" id="TIGR00576">
    <property type="entry name" value="dut"/>
    <property type="match status" value="1"/>
</dbReference>
<dbReference type="NCBIfam" id="NF001862">
    <property type="entry name" value="PRK00601.1"/>
    <property type="match status" value="1"/>
</dbReference>
<dbReference type="PANTHER" id="PTHR11241">
    <property type="entry name" value="DEOXYURIDINE 5'-TRIPHOSPHATE NUCLEOTIDOHYDROLASE"/>
    <property type="match status" value="1"/>
</dbReference>
<dbReference type="PANTHER" id="PTHR11241:SF0">
    <property type="entry name" value="DEOXYURIDINE 5'-TRIPHOSPHATE NUCLEOTIDOHYDROLASE"/>
    <property type="match status" value="1"/>
</dbReference>
<dbReference type="Pfam" id="PF00692">
    <property type="entry name" value="dUTPase"/>
    <property type="match status" value="1"/>
</dbReference>
<dbReference type="SUPFAM" id="SSF51283">
    <property type="entry name" value="dUTPase-like"/>
    <property type="match status" value="1"/>
</dbReference>
<feature type="chain" id="PRO_0000182935" description="Probable deoxyuridine 5'-triphosphate nucleotidohydrolase">
    <location>
        <begin position="1"/>
        <end position="140"/>
    </location>
</feature>
<feature type="binding site" evidence="1">
    <location>
        <begin position="62"/>
        <end position="64"/>
    </location>
    <ligand>
        <name>substrate</name>
    </ligand>
</feature>
<feature type="binding site" evidence="1">
    <location>
        <begin position="76"/>
        <end position="79"/>
    </location>
    <ligand>
        <name>substrate</name>
    </ligand>
</feature>
<feature type="binding site" evidence="1">
    <location>
        <position position="130"/>
    </location>
    <ligand>
        <name>substrate</name>
    </ligand>
</feature>
<feature type="binding site" evidence="1">
    <location>
        <begin position="135"/>
        <end position="136"/>
    </location>
    <ligand>
        <name>substrate</name>
    </ligand>
</feature>
<comment type="function">
    <text evidence="1">This enzyme is involved in nucleotide metabolism: it produces dUMP, the immediate precursor of thymidine nucleotides and it decreases the intracellular concentration of dUTP so that uracil cannot be incorporated into DNA.</text>
</comment>
<comment type="catalytic activity">
    <reaction>
        <text>dUTP + H2O = dUMP + diphosphate + H(+)</text>
        <dbReference type="Rhea" id="RHEA:10248"/>
        <dbReference type="ChEBI" id="CHEBI:15377"/>
        <dbReference type="ChEBI" id="CHEBI:15378"/>
        <dbReference type="ChEBI" id="CHEBI:33019"/>
        <dbReference type="ChEBI" id="CHEBI:61555"/>
        <dbReference type="ChEBI" id="CHEBI:246422"/>
        <dbReference type="EC" id="3.6.1.23"/>
    </reaction>
</comment>
<comment type="cofactor">
    <cofactor evidence="1">
        <name>Mg(2+)</name>
        <dbReference type="ChEBI" id="CHEBI:18420"/>
    </cofactor>
</comment>
<comment type="pathway">
    <text>Pyrimidine metabolism; dUMP biosynthesis; dUMP from dCTP (dUTP route): step 2/2.</text>
</comment>
<comment type="subunit">
    <text evidence="1">Homotrimer.</text>
</comment>
<comment type="similarity">
    <text evidence="2">Belongs to the dUTPase family.</text>
</comment>
<keyword id="KW-0378">Hydrolase</keyword>
<keyword id="KW-0460">Magnesium</keyword>
<keyword id="KW-0479">Metal-binding</keyword>
<keyword id="KW-0546">Nucleotide metabolism</keyword>
<keyword id="KW-1185">Reference proteome</keyword>